<feature type="chain" id="PRO_0000247694" description="NADPH-dependent 7-cyano-7-deazaguanine reductase">
    <location>
        <begin position="1"/>
        <end position="166"/>
    </location>
</feature>
<feature type="active site" description="Thioimide intermediate" evidence="1">
    <location>
        <position position="57"/>
    </location>
</feature>
<feature type="active site" description="Proton donor" evidence="1">
    <location>
        <position position="64"/>
    </location>
</feature>
<feature type="binding site" evidence="1">
    <location>
        <begin position="79"/>
        <end position="81"/>
    </location>
    <ligand>
        <name>substrate</name>
    </ligand>
</feature>
<feature type="binding site" evidence="1">
    <location>
        <begin position="98"/>
        <end position="99"/>
    </location>
    <ligand>
        <name>substrate</name>
    </ligand>
</feature>
<gene>
    <name evidence="1" type="primary">queF</name>
    <name type="ordered locus">SAB0678c</name>
</gene>
<protein>
    <recommendedName>
        <fullName evidence="1">NADPH-dependent 7-cyano-7-deazaguanine reductase</fullName>
        <ecNumber evidence="1">1.7.1.13</ecNumber>
    </recommendedName>
    <alternativeName>
        <fullName evidence="1">7-cyano-7-carbaguanine reductase</fullName>
    </alternativeName>
    <alternativeName>
        <fullName evidence="1">NADPH-dependent nitrile oxidoreductase</fullName>
    </alternativeName>
    <alternativeName>
        <fullName evidence="1">PreQ(0) reductase</fullName>
    </alternativeName>
</protein>
<keyword id="KW-0963">Cytoplasm</keyword>
<keyword id="KW-0521">NADP</keyword>
<keyword id="KW-0560">Oxidoreductase</keyword>
<keyword id="KW-0671">Queuosine biosynthesis</keyword>
<accession>Q2YSK2</accession>
<reference key="1">
    <citation type="journal article" date="2007" name="PLoS ONE">
        <title>Molecular correlates of host specialization in Staphylococcus aureus.</title>
        <authorList>
            <person name="Herron-Olson L."/>
            <person name="Fitzgerald J.R."/>
            <person name="Musser J.M."/>
            <person name="Kapur V."/>
        </authorList>
    </citation>
    <scope>NUCLEOTIDE SEQUENCE [LARGE SCALE GENOMIC DNA]</scope>
    <source>
        <strain>bovine RF122 / ET3-1</strain>
    </source>
</reference>
<sequence length="166" mass="19645">MAHGRQQDELQDITLLGNQDNTYNFDYRPDVLESFDNKHQGRDYFVKFNCPEFTSLCPITGQPDFATIYISYIPNVKMVESKSLKLYLFSFRNHGDFHEDCMNIIMNDLIELMDPHYIEVWGKFTPRGGISIDPYTNYGRPNSKYEKMAEHRLMNHDLYPEKIDNR</sequence>
<organism>
    <name type="scientific">Staphylococcus aureus (strain bovine RF122 / ET3-1)</name>
    <dbReference type="NCBI Taxonomy" id="273036"/>
    <lineage>
        <taxon>Bacteria</taxon>
        <taxon>Bacillati</taxon>
        <taxon>Bacillota</taxon>
        <taxon>Bacilli</taxon>
        <taxon>Bacillales</taxon>
        <taxon>Staphylococcaceae</taxon>
        <taxon>Staphylococcus</taxon>
    </lineage>
</organism>
<proteinExistence type="inferred from homology"/>
<evidence type="ECO:0000255" key="1">
    <source>
        <dbReference type="HAMAP-Rule" id="MF_00818"/>
    </source>
</evidence>
<name>QUEF_STAAB</name>
<dbReference type="EC" id="1.7.1.13" evidence="1"/>
<dbReference type="EMBL" id="AJ938182">
    <property type="protein sequence ID" value="CAI80366.1"/>
    <property type="molecule type" value="Genomic_DNA"/>
</dbReference>
<dbReference type="RefSeq" id="WP_000930014.1">
    <property type="nucleotide sequence ID" value="NC_007622.1"/>
</dbReference>
<dbReference type="SMR" id="Q2YSK2"/>
<dbReference type="KEGG" id="sab:SAB0678c"/>
<dbReference type="HOGENOM" id="CLU_102489_0_1_9"/>
<dbReference type="UniPathway" id="UPA00392"/>
<dbReference type="GO" id="GO:0005737">
    <property type="term" value="C:cytoplasm"/>
    <property type="evidence" value="ECO:0007669"/>
    <property type="project" value="UniProtKB-SubCell"/>
</dbReference>
<dbReference type="GO" id="GO:0033739">
    <property type="term" value="F:preQ1 synthase activity"/>
    <property type="evidence" value="ECO:0007669"/>
    <property type="project" value="UniProtKB-UniRule"/>
</dbReference>
<dbReference type="GO" id="GO:0008616">
    <property type="term" value="P:queuosine biosynthetic process"/>
    <property type="evidence" value="ECO:0007669"/>
    <property type="project" value="UniProtKB-UniRule"/>
</dbReference>
<dbReference type="GO" id="GO:0006400">
    <property type="term" value="P:tRNA modification"/>
    <property type="evidence" value="ECO:0007669"/>
    <property type="project" value="UniProtKB-UniRule"/>
</dbReference>
<dbReference type="Gene3D" id="3.30.1130.10">
    <property type="match status" value="1"/>
</dbReference>
<dbReference type="HAMAP" id="MF_00818">
    <property type="entry name" value="QueF_type1"/>
    <property type="match status" value="1"/>
</dbReference>
<dbReference type="InterPro" id="IPR043133">
    <property type="entry name" value="GTP-CH-I_C/QueF"/>
</dbReference>
<dbReference type="InterPro" id="IPR050084">
    <property type="entry name" value="NADPH_dep_7-cyano-7-deazaG_red"/>
</dbReference>
<dbReference type="InterPro" id="IPR029500">
    <property type="entry name" value="QueF"/>
</dbReference>
<dbReference type="InterPro" id="IPR016856">
    <property type="entry name" value="QueF_type1"/>
</dbReference>
<dbReference type="NCBIfam" id="TIGR03139">
    <property type="entry name" value="QueF-II"/>
    <property type="match status" value="1"/>
</dbReference>
<dbReference type="PANTHER" id="PTHR34354">
    <property type="entry name" value="NADPH-DEPENDENT 7-CYANO-7-DEAZAGUANINE REDUCTASE"/>
    <property type="match status" value="1"/>
</dbReference>
<dbReference type="PANTHER" id="PTHR34354:SF1">
    <property type="entry name" value="NADPH-DEPENDENT 7-CYANO-7-DEAZAGUANINE REDUCTASE"/>
    <property type="match status" value="1"/>
</dbReference>
<dbReference type="Pfam" id="PF14489">
    <property type="entry name" value="QueF"/>
    <property type="match status" value="1"/>
</dbReference>
<dbReference type="PIRSF" id="PIRSF027377">
    <property type="entry name" value="Nitrile_oxidored_QueF"/>
    <property type="match status" value="1"/>
</dbReference>
<dbReference type="SUPFAM" id="SSF55620">
    <property type="entry name" value="Tetrahydrobiopterin biosynthesis enzymes-like"/>
    <property type="match status" value="1"/>
</dbReference>
<comment type="function">
    <text evidence="1">Catalyzes the NADPH-dependent reduction of 7-cyano-7-deazaguanine (preQ0) to 7-aminomethyl-7-deazaguanine (preQ1).</text>
</comment>
<comment type="catalytic activity">
    <reaction evidence="1">
        <text>7-aminomethyl-7-carbaguanine + 2 NADP(+) = 7-cyano-7-deazaguanine + 2 NADPH + 3 H(+)</text>
        <dbReference type="Rhea" id="RHEA:13409"/>
        <dbReference type="ChEBI" id="CHEBI:15378"/>
        <dbReference type="ChEBI" id="CHEBI:45075"/>
        <dbReference type="ChEBI" id="CHEBI:57783"/>
        <dbReference type="ChEBI" id="CHEBI:58349"/>
        <dbReference type="ChEBI" id="CHEBI:58703"/>
        <dbReference type="EC" id="1.7.1.13"/>
    </reaction>
</comment>
<comment type="pathway">
    <text evidence="1">tRNA modification; tRNA-queuosine biosynthesis.</text>
</comment>
<comment type="subcellular location">
    <subcellularLocation>
        <location evidence="1">Cytoplasm</location>
    </subcellularLocation>
</comment>
<comment type="similarity">
    <text evidence="1">Belongs to the GTP cyclohydrolase I family. QueF type 1 subfamily.</text>
</comment>